<keyword id="KW-0007">Acetylation</keyword>
<keyword id="KW-1003">Cell membrane</keyword>
<keyword id="KW-0256">Endoplasmic reticulum</keyword>
<keyword id="KW-0391">Immunity</keyword>
<keyword id="KW-0399">Innate immunity</keyword>
<keyword id="KW-0472">Membrane</keyword>
<keyword id="KW-0539">Nucleus</keyword>
<keyword id="KW-1185">Reference proteome</keyword>
<keyword id="KW-0812">Transmembrane</keyword>
<keyword id="KW-1133">Transmembrane helix</keyword>
<dbReference type="EMBL" id="BC083626">
    <property type="protein sequence ID" value="AAH83626.1"/>
    <property type="molecule type" value="mRNA"/>
</dbReference>
<dbReference type="RefSeq" id="NP_001007746.1">
    <property type="nucleotide sequence ID" value="NM_001007745.1"/>
</dbReference>
<dbReference type="BioGRID" id="263420">
    <property type="interactions" value="1"/>
</dbReference>
<dbReference type="FunCoup" id="Q5XIP9">
    <property type="interactions" value="2151"/>
</dbReference>
<dbReference type="IntAct" id="Q5XIP9">
    <property type="interactions" value="2"/>
</dbReference>
<dbReference type="STRING" id="10116.ENSRNOP00000010895"/>
<dbReference type="PhosphoSitePlus" id="Q5XIP9"/>
<dbReference type="jPOST" id="Q5XIP9"/>
<dbReference type="PaxDb" id="10116-ENSRNOP00000010895"/>
<dbReference type="GeneID" id="362401"/>
<dbReference type="KEGG" id="rno:362401"/>
<dbReference type="AGR" id="RGD:1549711"/>
<dbReference type="CTD" id="79188"/>
<dbReference type="RGD" id="1549711">
    <property type="gene designation" value="Tmem43"/>
</dbReference>
<dbReference type="VEuPathDB" id="HostDB:ENSRNOG00000007519"/>
<dbReference type="eggNOG" id="ENOG502QSR2">
    <property type="taxonomic scope" value="Eukaryota"/>
</dbReference>
<dbReference type="HOGENOM" id="CLU_042602_1_0_1"/>
<dbReference type="InParanoid" id="Q5XIP9"/>
<dbReference type="OrthoDB" id="8818at9989"/>
<dbReference type="PhylomeDB" id="Q5XIP9"/>
<dbReference type="TreeFam" id="TF324718"/>
<dbReference type="PRO" id="PR:Q5XIP9"/>
<dbReference type="Proteomes" id="UP000002494">
    <property type="component" value="Chromosome 4"/>
</dbReference>
<dbReference type="Bgee" id="ENSRNOG00000007519">
    <property type="expression patterns" value="Expressed in esophagus and 19 other cell types or tissues"/>
</dbReference>
<dbReference type="GO" id="GO:0005788">
    <property type="term" value="C:endoplasmic reticulum lumen"/>
    <property type="evidence" value="ECO:0000266"/>
    <property type="project" value="RGD"/>
</dbReference>
<dbReference type="GO" id="GO:0005789">
    <property type="term" value="C:endoplasmic reticulum membrane"/>
    <property type="evidence" value="ECO:0007669"/>
    <property type="project" value="UniProtKB-SubCell"/>
</dbReference>
<dbReference type="GO" id="GO:0005637">
    <property type="term" value="C:nuclear inner membrane"/>
    <property type="evidence" value="ECO:0000266"/>
    <property type="project" value="RGD"/>
</dbReference>
<dbReference type="GO" id="GO:0005886">
    <property type="term" value="C:plasma membrane"/>
    <property type="evidence" value="ECO:0007669"/>
    <property type="project" value="UniProtKB-SubCell"/>
</dbReference>
<dbReference type="GO" id="GO:0042802">
    <property type="term" value="F:identical protein binding"/>
    <property type="evidence" value="ECO:0000266"/>
    <property type="project" value="RGD"/>
</dbReference>
<dbReference type="GO" id="GO:0045087">
    <property type="term" value="P:innate immune response"/>
    <property type="evidence" value="ECO:0007669"/>
    <property type="project" value="UniProtKB-KW"/>
</dbReference>
<dbReference type="GO" id="GO:0006629">
    <property type="term" value="P:lipid metabolic process"/>
    <property type="evidence" value="ECO:0000318"/>
    <property type="project" value="GO_Central"/>
</dbReference>
<dbReference type="GO" id="GO:0071763">
    <property type="term" value="P:nuclear membrane organization"/>
    <property type="evidence" value="ECO:0000266"/>
    <property type="project" value="RGD"/>
</dbReference>
<dbReference type="InterPro" id="IPR012430">
    <property type="entry name" value="TMEM43_fam"/>
</dbReference>
<dbReference type="PANTHER" id="PTHR13416">
    <property type="match status" value="1"/>
</dbReference>
<dbReference type="PANTHER" id="PTHR13416:SF2">
    <property type="entry name" value="TRANSMEMBRANE PROTEIN 43"/>
    <property type="match status" value="1"/>
</dbReference>
<dbReference type="Pfam" id="PF07787">
    <property type="entry name" value="TMEM43"/>
    <property type="match status" value="1"/>
</dbReference>
<protein>
    <recommendedName>
        <fullName>Transmembrane protein 43</fullName>
    </recommendedName>
    <alternativeName>
        <fullName>Protein LUMA</fullName>
    </alternativeName>
</protein>
<proteinExistence type="evidence at transcript level"/>
<feature type="initiator methionine" description="Removed" evidence="2">
    <location>
        <position position="1"/>
    </location>
</feature>
<feature type="chain" id="PRO_0000284501" description="Transmembrane protein 43">
    <location>
        <begin position="2"/>
        <end position="400"/>
    </location>
</feature>
<feature type="topological domain" description="Nuclear" evidence="3">
    <location>
        <begin position="2"/>
        <end position="31"/>
    </location>
</feature>
<feature type="transmembrane region" description="Helical" evidence="3">
    <location>
        <begin position="32"/>
        <end position="52"/>
    </location>
</feature>
<feature type="topological domain" description="Perinuclear space" evidence="3">
    <location>
        <begin position="53"/>
        <end position="313"/>
    </location>
</feature>
<feature type="transmembrane region" description="Helical" evidence="3">
    <location>
        <begin position="314"/>
        <end position="334"/>
    </location>
</feature>
<feature type="topological domain" description="Nuclear" evidence="3">
    <location>
        <begin position="335"/>
        <end position="345"/>
    </location>
</feature>
<feature type="transmembrane region" description="Helical" evidence="3">
    <location>
        <begin position="346"/>
        <end position="366"/>
    </location>
</feature>
<feature type="topological domain" description="Perinuclear space" evidence="3">
    <location>
        <begin position="367"/>
        <end position="368"/>
    </location>
</feature>
<feature type="transmembrane region" description="Helical" evidence="3">
    <location>
        <begin position="369"/>
        <end position="389"/>
    </location>
</feature>
<feature type="topological domain" description="Nuclear" evidence="3">
    <location>
        <begin position="390"/>
        <end position="400"/>
    </location>
</feature>
<feature type="region of interest" description="Disordered" evidence="4">
    <location>
        <begin position="1"/>
        <end position="23"/>
    </location>
</feature>
<feature type="modified residue" description="N-acetylalanine" evidence="2">
    <location>
        <position position="2"/>
    </location>
</feature>
<name>TMM43_RAT</name>
<reference key="1">
    <citation type="journal article" date="2004" name="Genome Res.">
        <title>The status, quality, and expansion of the NIH full-length cDNA project: the Mammalian Gene Collection (MGC).</title>
        <authorList>
            <consortium name="The MGC Project Team"/>
        </authorList>
    </citation>
    <scope>NUCLEOTIDE SEQUENCE [LARGE SCALE MRNA]</scope>
    <source>
        <tissue>Testis</tissue>
    </source>
</reference>
<gene>
    <name type="primary">Tmem43</name>
</gene>
<accession>Q5XIP9</accession>
<evidence type="ECO:0000250" key="1"/>
<evidence type="ECO:0000250" key="2">
    <source>
        <dbReference type="UniProtKB" id="Q9BTV4"/>
    </source>
</evidence>
<evidence type="ECO:0000255" key="3"/>
<evidence type="ECO:0000256" key="4">
    <source>
        <dbReference type="SAM" id="MobiDB-lite"/>
    </source>
</evidence>
<evidence type="ECO:0000305" key="5"/>
<organism>
    <name type="scientific">Rattus norvegicus</name>
    <name type="common">Rat</name>
    <dbReference type="NCBI Taxonomy" id="10116"/>
    <lineage>
        <taxon>Eukaryota</taxon>
        <taxon>Metazoa</taxon>
        <taxon>Chordata</taxon>
        <taxon>Craniata</taxon>
        <taxon>Vertebrata</taxon>
        <taxon>Euteleostomi</taxon>
        <taxon>Mammalia</taxon>
        <taxon>Eutheria</taxon>
        <taxon>Euarchontoglires</taxon>
        <taxon>Glires</taxon>
        <taxon>Rodentia</taxon>
        <taxon>Myomorpha</taxon>
        <taxon>Muroidea</taxon>
        <taxon>Muridae</taxon>
        <taxon>Murinae</taxon>
        <taxon>Rattus</taxon>
    </lineage>
</organism>
<sequence>MAANYSSTGSRKEHVKVTSDPQPGFLERLSETSGGMFVGLVTFLLSFYLIFTNEGRALKTANLLAEGLSLVVSPDSIHSVAPENEGRLVHIIGALRTSKLLSDPNYGVHLPAVKLRRHVEMYQWVETEESNEYTEDGQVKKETKYSYNTEWRSEIVSSKNFDREIGHKNPSAMAVESFTATAPFVQIGRFFLSAGLIDKIDNFKPLSLAKLEDPHVDIIRRGDFFYHSENPKYPEVGDVRVSFSYAGLSSDDPDLGPAHVVTVIARQRGDQLIPYSTKSGDTLLLLHHGDFSAEEVFRREQKSNSMKTWGLRAAGWMAMFMGLNLMTRILYTLVDWFPVFRDLVNIGLKAFAFCVATSLTLLTVAAGWLFYRPLWAALLGCLALVPIIIARTRVPTKKLE</sequence>
<comment type="function">
    <text evidence="2">May have an important role in maintaining nuclear envelope structure by organizing protein complexes at the inner nuclear membrane. Required for retaining emerin at the inner nuclear membrane (By similarity). Plays a role in the modulation of innate immune signaling through the cGAS-STING pathway by interacting with RNF26 (By similarity). In addition, functions as a critical signaling component in mediating NF-kappa-B activation by acting downstream of EGFR and upstream of CARD10 (By similarity). Contributes to passive conductance current in cochlear glia-like supporting cells, mediated by gap junctions and necessary for hearing (By similarity).</text>
</comment>
<comment type="subunit">
    <text evidence="1 2">Can form oligomers through the transmembrane domains. Interacts with EMD; the interaction retains EMD at the inner nuclear membrane. Interacts with LMNA and LMNB2 (By similarity). Interacts with SUN2. Interacts with RNF26; this interaction is important to modulate innate immune signaling through the cGAS-STING pathway. Interacts with CARD10 (By similarity). Interacts with gap junctions proteins GJB2/Cx26 and GJB4/Cx30 (By similarity).</text>
</comment>
<comment type="subcellular location">
    <subcellularLocation>
        <location evidence="2">Endoplasmic reticulum membrane</location>
    </subcellularLocation>
    <subcellularLocation>
        <location evidence="2">Nucleus inner membrane</location>
        <topology evidence="2">Multi-pass membrane protein</topology>
    </subcellularLocation>
    <subcellularLocation>
        <location evidence="2">Cell membrane</location>
    </subcellularLocation>
    <text evidence="1">Retained in the inner nuclear membrane through interaction with EMD and A- and B-lamins. The N- and C-termini are oriented towards the nucleoplasm. The majority of the hydrophilic domain resides in the endoplasmic reticulum lumen (By similarity).</text>
</comment>
<comment type="similarity">
    <text evidence="5">Belongs to the TMEM43 family.</text>
</comment>